<comment type="function">
    <text evidence="1">Specifically methylates the uridine in position 2552 of 23S rRNA at the 2'-O position of the ribose in the fully assembled 50S ribosomal subunit.</text>
</comment>
<comment type="catalytic activity">
    <reaction evidence="1">
        <text>uridine(2552) in 23S rRNA + S-adenosyl-L-methionine = 2'-O-methyluridine(2552) in 23S rRNA + S-adenosyl-L-homocysteine + H(+)</text>
        <dbReference type="Rhea" id="RHEA:42720"/>
        <dbReference type="Rhea" id="RHEA-COMP:10202"/>
        <dbReference type="Rhea" id="RHEA-COMP:10203"/>
        <dbReference type="ChEBI" id="CHEBI:15378"/>
        <dbReference type="ChEBI" id="CHEBI:57856"/>
        <dbReference type="ChEBI" id="CHEBI:59789"/>
        <dbReference type="ChEBI" id="CHEBI:65315"/>
        <dbReference type="ChEBI" id="CHEBI:74478"/>
        <dbReference type="EC" id="2.1.1.166"/>
    </reaction>
</comment>
<comment type="subcellular location">
    <subcellularLocation>
        <location evidence="1">Cytoplasm</location>
    </subcellularLocation>
</comment>
<comment type="similarity">
    <text evidence="1">Belongs to the class I-like SAM-binding methyltransferase superfamily. RNA methyltransferase RlmE family.</text>
</comment>
<accession>A1RGW7</accession>
<evidence type="ECO:0000255" key="1">
    <source>
        <dbReference type="HAMAP-Rule" id="MF_01547"/>
    </source>
</evidence>
<sequence length="209" mass="23163">MSGKKRTASSNRWMLEHFDDHYVKLAQKRGLRSRAAFKLEELQQKDQLIRPGMTVVDLGAAPGGWSQVAVKLVGDRGKVIACDILPMDPIVGVDFLQGDFREEKVLEALLTRVGADKVDVVLSDMAPNMSGSDGVDQPRAMYLVELALDMCHQVLAPNGSFAVKVFQGEGFDEYMKAVKEAFKVVKTRKPDSSRARSREVYLVATGYKL</sequence>
<feature type="chain" id="PRO_0000282800" description="Ribosomal RNA large subunit methyltransferase E">
    <location>
        <begin position="1"/>
        <end position="209"/>
    </location>
</feature>
<feature type="active site" description="Proton acceptor" evidence="1">
    <location>
        <position position="164"/>
    </location>
</feature>
<feature type="binding site" evidence="1">
    <location>
        <position position="63"/>
    </location>
    <ligand>
        <name>S-adenosyl-L-methionine</name>
        <dbReference type="ChEBI" id="CHEBI:59789"/>
    </ligand>
</feature>
<feature type="binding site" evidence="1">
    <location>
        <position position="65"/>
    </location>
    <ligand>
        <name>S-adenosyl-L-methionine</name>
        <dbReference type="ChEBI" id="CHEBI:59789"/>
    </ligand>
</feature>
<feature type="binding site" evidence="1">
    <location>
        <position position="83"/>
    </location>
    <ligand>
        <name>S-adenosyl-L-methionine</name>
        <dbReference type="ChEBI" id="CHEBI:59789"/>
    </ligand>
</feature>
<feature type="binding site" evidence="1">
    <location>
        <position position="99"/>
    </location>
    <ligand>
        <name>S-adenosyl-L-methionine</name>
        <dbReference type="ChEBI" id="CHEBI:59789"/>
    </ligand>
</feature>
<feature type="binding site" evidence="1">
    <location>
        <position position="124"/>
    </location>
    <ligand>
        <name>S-adenosyl-L-methionine</name>
        <dbReference type="ChEBI" id="CHEBI:59789"/>
    </ligand>
</feature>
<name>RLME_SHESW</name>
<organism>
    <name type="scientific">Shewanella sp. (strain W3-18-1)</name>
    <dbReference type="NCBI Taxonomy" id="351745"/>
    <lineage>
        <taxon>Bacteria</taxon>
        <taxon>Pseudomonadati</taxon>
        <taxon>Pseudomonadota</taxon>
        <taxon>Gammaproteobacteria</taxon>
        <taxon>Alteromonadales</taxon>
        <taxon>Shewanellaceae</taxon>
        <taxon>Shewanella</taxon>
    </lineage>
</organism>
<reference key="1">
    <citation type="submission" date="2006-12" db="EMBL/GenBank/DDBJ databases">
        <title>Complete sequence of Shewanella sp. W3-18-1.</title>
        <authorList>
            <consortium name="US DOE Joint Genome Institute"/>
            <person name="Copeland A."/>
            <person name="Lucas S."/>
            <person name="Lapidus A."/>
            <person name="Barry K."/>
            <person name="Detter J.C."/>
            <person name="Glavina del Rio T."/>
            <person name="Hammon N."/>
            <person name="Israni S."/>
            <person name="Dalin E."/>
            <person name="Tice H."/>
            <person name="Pitluck S."/>
            <person name="Chain P."/>
            <person name="Malfatti S."/>
            <person name="Shin M."/>
            <person name="Vergez L."/>
            <person name="Schmutz J."/>
            <person name="Larimer F."/>
            <person name="Land M."/>
            <person name="Hauser L."/>
            <person name="Kyrpides N."/>
            <person name="Lykidis A."/>
            <person name="Tiedje J."/>
            <person name="Richardson P."/>
        </authorList>
    </citation>
    <scope>NUCLEOTIDE SEQUENCE [LARGE SCALE GENOMIC DNA]</scope>
    <source>
        <strain>W3-18-1</strain>
    </source>
</reference>
<gene>
    <name evidence="1" type="primary">rlmE</name>
    <name evidence="1" type="synonym">ftsJ</name>
    <name evidence="1" type="synonym">rrmJ</name>
    <name type="ordered locus">Sputw3181_1062</name>
</gene>
<protein>
    <recommendedName>
        <fullName evidence="1">Ribosomal RNA large subunit methyltransferase E</fullName>
        <ecNumber evidence="1">2.1.1.166</ecNumber>
    </recommendedName>
    <alternativeName>
        <fullName evidence="1">23S rRNA Um2552 methyltransferase</fullName>
    </alternativeName>
    <alternativeName>
        <fullName evidence="1">rRNA (uridine-2'-O-)-methyltransferase</fullName>
    </alternativeName>
</protein>
<keyword id="KW-0963">Cytoplasm</keyword>
<keyword id="KW-0489">Methyltransferase</keyword>
<keyword id="KW-0698">rRNA processing</keyword>
<keyword id="KW-0949">S-adenosyl-L-methionine</keyword>
<keyword id="KW-0808">Transferase</keyword>
<proteinExistence type="inferred from homology"/>
<dbReference type="EC" id="2.1.1.166" evidence="1"/>
<dbReference type="EMBL" id="CP000503">
    <property type="protein sequence ID" value="ABM23912.1"/>
    <property type="molecule type" value="Genomic_DNA"/>
</dbReference>
<dbReference type="RefSeq" id="WP_011788436.1">
    <property type="nucleotide sequence ID" value="NC_008750.1"/>
</dbReference>
<dbReference type="SMR" id="A1RGW7"/>
<dbReference type="KEGG" id="shw:Sputw3181_1062"/>
<dbReference type="HOGENOM" id="CLU_009422_4_0_6"/>
<dbReference type="Proteomes" id="UP000002597">
    <property type="component" value="Chromosome"/>
</dbReference>
<dbReference type="GO" id="GO:0005737">
    <property type="term" value="C:cytoplasm"/>
    <property type="evidence" value="ECO:0007669"/>
    <property type="project" value="UniProtKB-SubCell"/>
</dbReference>
<dbReference type="GO" id="GO:0008650">
    <property type="term" value="F:rRNA (uridine-2'-O-)-methyltransferase activity"/>
    <property type="evidence" value="ECO:0007669"/>
    <property type="project" value="UniProtKB-UniRule"/>
</dbReference>
<dbReference type="FunFam" id="3.40.50.150:FF:000005">
    <property type="entry name" value="Ribosomal RNA large subunit methyltransferase E"/>
    <property type="match status" value="1"/>
</dbReference>
<dbReference type="Gene3D" id="3.40.50.150">
    <property type="entry name" value="Vaccinia Virus protein VP39"/>
    <property type="match status" value="1"/>
</dbReference>
<dbReference type="HAMAP" id="MF_01547">
    <property type="entry name" value="RNA_methyltr_E"/>
    <property type="match status" value="1"/>
</dbReference>
<dbReference type="InterPro" id="IPR050082">
    <property type="entry name" value="RNA_methyltr_RlmE"/>
</dbReference>
<dbReference type="InterPro" id="IPR002877">
    <property type="entry name" value="RNA_MeTrfase_FtsJ_dom"/>
</dbReference>
<dbReference type="InterPro" id="IPR015507">
    <property type="entry name" value="rRNA-MeTfrase_E"/>
</dbReference>
<dbReference type="InterPro" id="IPR029063">
    <property type="entry name" value="SAM-dependent_MTases_sf"/>
</dbReference>
<dbReference type="NCBIfam" id="NF008390">
    <property type="entry name" value="PRK11188.1"/>
    <property type="match status" value="1"/>
</dbReference>
<dbReference type="PANTHER" id="PTHR10920">
    <property type="entry name" value="RIBOSOMAL RNA METHYLTRANSFERASE"/>
    <property type="match status" value="1"/>
</dbReference>
<dbReference type="PANTHER" id="PTHR10920:SF18">
    <property type="entry name" value="RRNA METHYLTRANSFERASE 2, MITOCHONDRIAL"/>
    <property type="match status" value="1"/>
</dbReference>
<dbReference type="Pfam" id="PF01728">
    <property type="entry name" value="FtsJ"/>
    <property type="match status" value="1"/>
</dbReference>
<dbReference type="PIRSF" id="PIRSF005461">
    <property type="entry name" value="23S_rRNA_mtase"/>
    <property type="match status" value="1"/>
</dbReference>
<dbReference type="SUPFAM" id="SSF53335">
    <property type="entry name" value="S-adenosyl-L-methionine-dependent methyltransferases"/>
    <property type="match status" value="1"/>
</dbReference>